<comment type="function">
    <text evidence="1">Represses a number of genes involved in the response to DNA damage (SOS response), including recA and lexA. In the presence of single-stranded DNA, RecA interacts with LexA causing an autocatalytic cleavage which disrupts the DNA-binding part of LexA, leading to derepression of the SOS regulon and eventually DNA repair.</text>
</comment>
<comment type="catalytic activity">
    <reaction evidence="1">
        <text>Hydrolysis of Ala-|-Gly bond in repressor LexA.</text>
        <dbReference type="EC" id="3.4.21.88"/>
    </reaction>
</comment>
<comment type="subunit">
    <text evidence="1">Homodimer.</text>
</comment>
<comment type="similarity">
    <text evidence="1">Belongs to the peptidase S24 family.</text>
</comment>
<evidence type="ECO:0000255" key="1">
    <source>
        <dbReference type="HAMAP-Rule" id="MF_00015"/>
    </source>
</evidence>
<protein>
    <recommendedName>
        <fullName evidence="1">LexA repressor</fullName>
        <ecNumber evidence="1">3.4.21.88</ecNumber>
    </recommendedName>
</protein>
<proteinExistence type="inferred from homology"/>
<keyword id="KW-0068">Autocatalytic cleavage</keyword>
<keyword id="KW-0227">DNA damage</keyword>
<keyword id="KW-0234">DNA repair</keyword>
<keyword id="KW-0235">DNA replication</keyword>
<keyword id="KW-0238">DNA-binding</keyword>
<keyword id="KW-0378">Hydrolase</keyword>
<keyword id="KW-1185">Reference proteome</keyword>
<keyword id="KW-0678">Repressor</keyword>
<keyword id="KW-0742">SOS response</keyword>
<keyword id="KW-0804">Transcription</keyword>
<keyword id="KW-0805">Transcription regulation</keyword>
<sequence length="202" mass="22267">MKDLTEKQEFVLQYISDTVREKGFPPTIREIGDQFGITAKGAYDHLKAIEKKGYIRTSKNQSRAIELLKGNADEALLVRASGIPLLGQVAAGAPILAEENIEEYIAVPDDLATKPGTFALRVKGDSMVEAGISDGDIAIIQKKDTARNGEIVVALIENEATLKVFFKEPDMIRLEPRNAKLKPIRTKKATIIGKLIGLYRIY</sequence>
<dbReference type="EC" id="3.4.21.88" evidence="1"/>
<dbReference type="EMBL" id="CP000786">
    <property type="protein sequence ID" value="ABZ97426.1"/>
    <property type="molecule type" value="Genomic_DNA"/>
</dbReference>
<dbReference type="RefSeq" id="WP_012388307.1">
    <property type="nucleotide sequence ID" value="NC_010602.1"/>
</dbReference>
<dbReference type="SMR" id="B0SPA2"/>
<dbReference type="STRING" id="456481.LEPBI_I1316"/>
<dbReference type="MEROPS" id="S24.001"/>
<dbReference type="KEGG" id="lbi:LEPBI_I1316"/>
<dbReference type="HOGENOM" id="CLU_066192_45_1_12"/>
<dbReference type="OrthoDB" id="9802364at2"/>
<dbReference type="BioCyc" id="LBIF456481:LEPBI_RS06445-MONOMER"/>
<dbReference type="Proteomes" id="UP000001847">
    <property type="component" value="Chromosome I"/>
</dbReference>
<dbReference type="GO" id="GO:0003677">
    <property type="term" value="F:DNA binding"/>
    <property type="evidence" value="ECO:0007669"/>
    <property type="project" value="UniProtKB-UniRule"/>
</dbReference>
<dbReference type="GO" id="GO:0004252">
    <property type="term" value="F:serine-type endopeptidase activity"/>
    <property type="evidence" value="ECO:0007669"/>
    <property type="project" value="UniProtKB-UniRule"/>
</dbReference>
<dbReference type="GO" id="GO:0006281">
    <property type="term" value="P:DNA repair"/>
    <property type="evidence" value="ECO:0007669"/>
    <property type="project" value="UniProtKB-UniRule"/>
</dbReference>
<dbReference type="GO" id="GO:0006260">
    <property type="term" value="P:DNA replication"/>
    <property type="evidence" value="ECO:0007669"/>
    <property type="project" value="UniProtKB-UniRule"/>
</dbReference>
<dbReference type="GO" id="GO:0045892">
    <property type="term" value="P:negative regulation of DNA-templated transcription"/>
    <property type="evidence" value="ECO:0007669"/>
    <property type="project" value="UniProtKB-UniRule"/>
</dbReference>
<dbReference type="GO" id="GO:0006508">
    <property type="term" value="P:proteolysis"/>
    <property type="evidence" value="ECO:0007669"/>
    <property type="project" value="InterPro"/>
</dbReference>
<dbReference type="GO" id="GO:0009432">
    <property type="term" value="P:SOS response"/>
    <property type="evidence" value="ECO:0007669"/>
    <property type="project" value="UniProtKB-UniRule"/>
</dbReference>
<dbReference type="CDD" id="cd06529">
    <property type="entry name" value="S24_LexA-like"/>
    <property type="match status" value="1"/>
</dbReference>
<dbReference type="FunFam" id="1.10.10.10:FF:000009">
    <property type="entry name" value="LexA repressor"/>
    <property type="match status" value="1"/>
</dbReference>
<dbReference type="FunFam" id="2.10.109.10:FF:000001">
    <property type="entry name" value="LexA repressor"/>
    <property type="match status" value="1"/>
</dbReference>
<dbReference type="Gene3D" id="2.10.109.10">
    <property type="entry name" value="Umud Fragment, subunit A"/>
    <property type="match status" value="1"/>
</dbReference>
<dbReference type="Gene3D" id="1.10.10.10">
    <property type="entry name" value="Winged helix-like DNA-binding domain superfamily/Winged helix DNA-binding domain"/>
    <property type="match status" value="1"/>
</dbReference>
<dbReference type="HAMAP" id="MF_00015">
    <property type="entry name" value="LexA"/>
    <property type="match status" value="1"/>
</dbReference>
<dbReference type="InterPro" id="IPR006200">
    <property type="entry name" value="LexA"/>
</dbReference>
<dbReference type="InterPro" id="IPR039418">
    <property type="entry name" value="LexA-like"/>
</dbReference>
<dbReference type="InterPro" id="IPR036286">
    <property type="entry name" value="LexA/Signal_pep-like_sf"/>
</dbReference>
<dbReference type="InterPro" id="IPR006199">
    <property type="entry name" value="LexA_DNA-bd_dom"/>
</dbReference>
<dbReference type="InterPro" id="IPR050077">
    <property type="entry name" value="LexA_repressor"/>
</dbReference>
<dbReference type="InterPro" id="IPR006197">
    <property type="entry name" value="Peptidase_S24_LexA"/>
</dbReference>
<dbReference type="InterPro" id="IPR015927">
    <property type="entry name" value="Peptidase_S24_S26A/B/C"/>
</dbReference>
<dbReference type="InterPro" id="IPR036388">
    <property type="entry name" value="WH-like_DNA-bd_sf"/>
</dbReference>
<dbReference type="InterPro" id="IPR036390">
    <property type="entry name" value="WH_DNA-bd_sf"/>
</dbReference>
<dbReference type="NCBIfam" id="TIGR00498">
    <property type="entry name" value="lexA"/>
    <property type="match status" value="1"/>
</dbReference>
<dbReference type="PANTHER" id="PTHR33516">
    <property type="entry name" value="LEXA REPRESSOR"/>
    <property type="match status" value="1"/>
</dbReference>
<dbReference type="PANTHER" id="PTHR33516:SF2">
    <property type="entry name" value="LEXA REPRESSOR-RELATED"/>
    <property type="match status" value="1"/>
</dbReference>
<dbReference type="Pfam" id="PF01726">
    <property type="entry name" value="LexA_DNA_bind"/>
    <property type="match status" value="1"/>
</dbReference>
<dbReference type="Pfam" id="PF00717">
    <property type="entry name" value="Peptidase_S24"/>
    <property type="match status" value="1"/>
</dbReference>
<dbReference type="PRINTS" id="PR00726">
    <property type="entry name" value="LEXASERPTASE"/>
</dbReference>
<dbReference type="SUPFAM" id="SSF51306">
    <property type="entry name" value="LexA/Signal peptidase"/>
    <property type="match status" value="1"/>
</dbReference>
<dbReference type="SUPFAM" id="SSF46785">
    <property type="entry name" value="Winged helix' DNA-binding domain"/>
    <property type="match status" value="1"/>
</dbReference>
<gene>
    <name evidence="1" type="primary">lexA</name>
    <name type="ordered locus">LEPBI_I1316</name>
</gene>
<reference key="1">
    <citation type="journal article" date="2008" name="PLoS ONE">
        <title>Genome sequence of the saprophyte Leptospira biflexa provides insights into the evolution of Leptospira and the pathogenesis of leptospirosis.</title>
        <authorList>
            <person name="Picardeau M."/>
            <person name="Bulach D.M."/>
            <person name="Bouchier C."/>
            <person name="Zuerner R.L."/>
            <person name="Zidane N."/>
            <person name="Wilson P.J."/>
            <person name="Creno S."/>
            <person name="Kuczek E.S."/>
            <person name="Bommezzadri S."/>
            <person name="Davis J.C."/>
            <person name="McGrath A."/>
            <person name="Johnson M.J."/>
            <person name="Boursaux-Eude C."/>
            <person name="Seemann T."/>
            <person name="Rouy Z."/>
            <person name="Coppel R.L."/>
            <person name="Rood J.I."/>
            <person name="Lajus A."/>
            <person name="Davies J.K."/>
            <person name="Medigue C."/>
            <person name="Adler B."/>
        </authorList>
    </citation>
    <scope>NUCLEOTIDE SEQUENCE [LARGE SCALE GENOMIC DNA]</scope>
    <source>
        <strain>Patoc 1 / ATCC 23582 / Paris</strain>
    </source>
</reference>
<accession>B0SPA2</accession>
<feature type="chain" id="PRO_1000089575" description="LexA repressor">
    <location>
        <begin position="1"/>
        <end position="202"/>
    </location>
</feature>
<feature type="DNA-binding region" description="H-T-H motif" evidence="1">
    <location>
        <begin position="28"/>
        <end position="47"/>
    </location>
</feature>
<feature type="active site" description="For autocatalytic cleavage activity" evidence="1">
    <location>
        <position position="126"/>
    </location>
</feature>
<feature type="active site" description="For autocatalytic cleavage activity" evidence="1">
    <location>
        <position position="163"/>
    </location>
</feature>
<feature type="site" description="Cleavage; by autolysis" evidence="1">
    <location>
        <begin position="91"/>
        <end position="92"/>
    </location>
</feature>
<organism>
    <name type="scientific">Leptospira biflexa serovar Patoc (strain Patoc 1 / ATCC 23582 / Paris)</name>
    <dbReference type="NCBI Taxonomy" id="456481"/>
    <lineage>
        <taxon>Bacteria</taxon>
        <taxon>Pseudomonadati</taxon>
        <taxon>Spirochaetota</taxon>
        <taxon>Spirochaetia</taxon>
        <taxon>Leptospirales</taxon>
        <taxon>Leptospiraceae</taxon>
        <taxon>Leptospira</taxon>
    </lineage>
</organism>
<name>LEXA_LEPBP</name>